<organism>
    <name type="scientific">Bartonella quintana (strain Toulouse)</name>
    <name type="common">Rochalimaea quintana</name>
    <dbReference type="NCBI Taxonomy" id="283165"/>
    <lineage>
        <taxon>Bacteria</taxon>
        <taxon>Pseudomonadati</taxon>
        <taxon>Pseudomonadota</taxon>
        <taxon>Alphaproteobacteria</taxon>
        <taxon>Hyphomicrobiales</taxon>
        <taxon>Bartonellaceae</taxon>
        <taxon>Bartonella</taxon>
    </lineage>
</organism>
<sequence length="475" mass="52116">MKMPFNIGLIHFVGVGGIGMSGIAEVFHNLGYKVQGSDHVDSANVERLRGKGINIQIGHHAENLGDAEVVVLSTAIKKTNPEYIAAKEKHLPIVRRAEMLAELMRFRRAIAVGGTHGKTTTTSMIAALLDAGRFDPMVINGGIINAYGTNARMGSGDWMVVEADESDGTFLKLPADIAVVTNIDREHLDHYGSFCAVREAFRQFVENVPFYGFAVLCLDHPEVQSLASRIDDRWVITYGTNPQADIRFLNLSMDGQKTHFDVFIRSRKTGKETELKNLVLPMSGQHNVSNATAAIAIAHELGISNESIKKGLAEFGGVKRRFTQTGSWRGIEIFDDYGHHPVEIKAVLYAARESAKGRVIAIVQPHRYSRLYHLFDDFAACFNDADTVLIAPIYGAGEAPIAGFGARELVEHIKMAGHRDVRLIHCLEDVVLIVSTFAKPGDYVVFLGAGNITQWAAALPHQLAVLDNNDEFSVD</sequence>
<dbReference type="EC" id="6.3.2.8" evidence="1"/>
<dbReference type="EMBL" id="BX897700">
    <property type="protein sequence ID" value="CAF26364.1"/>
    <property type="molecule type" value="Genomic_DNA"/>
</dbReference>
<dbReference type="RefSeq" id="WP_011179602.1">
    <property type="nucleotide sequence ID" value="NC_005955.1"/>
</dbReference>
<dbReference type="SMR" id="Q6G125"/>
<dbReference type="KEGG" id="bqu:BQ08850"/>
<dbReference type="eggNOG" id="COG0773">
    <property type="taxonomic scope" value="Bacteria"/>
</dbReference>
<dbReference type="HOGENOM" id="CLU_028104_2_2_5"/>
<dbReference type="OrthoDB" id="9804126at2"/>
<dbReference type="UniPathway" id="UPA00219"/>
<dbReference type="Proteomes" id="UP000000597">
    <property type="component" value="Chromosome"/>
</dbReference>
<dbReference type="GO" id="GO:0005737">
    <property type="term" value="C:cytoplasm"/>
    <property type="evidence" value="ECO:0007669"/>
    <property type="project" value="UniProtKB-SubCell"/>
</dbReference>
<dbReference type="GO" id="GO:0005524">
    <property type="term" value="F:ATP binding"/>
    <property type="evidence" value="ECO:0007669"/>
    <property type="project" value="UniProtKB-UniRule"/>
</dbReference>
<dbReference type="GO" id="GO:0008763">
    <property type="term" value="F:UDP-N-acetylmuramate-L-alanine ligase activity"/>
    <property type="evidence" value="ECO:0007669"/>
    <property type="project" value="UniProtKB-UniRule"/>
</dbReference>
<dbReference type="GO" id="GO:0051301">
    <property type="term" value="P:cell division"/>
    <property type="evidence" value="ECO:0007669"/>
    <property type="project" value="UniProtKB-KW"/>
</dbReference>
<dbReference type="GO" id="GO:0071555">
    <property type="term" value="P:cell wall organization"/>
    <property type="evidence" value="ECO:0007669"/>
    <property type="project" value="UniProtKB-KW"/>
</dbReference>
<dbReference type="GO" id="GO:0009252">
    <property type="term" value="P:peptidoglycan biosynthetic process"/>
    <property type="evidence" value="ECO:0007669"/>
    <property type="project" value="UniProtKB-UniRule"/>
</dbReference>
<dbReference type="GO" id="GO:0008360">
    <property type="term" value="P:regulation of cell shape"/>
    <property type="evidence" value="ECO:0007669"/>
    <property type="project" value="UniProtKB-KW"/>
</dbReference>
<dbReference type="Gene3D" id="3.90.190.20">
    <property type="entry name" value="Mur ligase, C-terminal domain"/>
    <property type="match status" value="1"/>
</dbReference>
<dbReference type="Gene3D" id="3.40.1190.10">
    <property type="entry name" value="Mur-like, catalytic domain"/>
    <property type="match status" value="1"/>
</dbReference>
<dbReference type="Gene3D" id="3.40.50.720">
    <property type="entry name" value="NAD(P)-binding Rossmann-like Domain"/>
    <property type="match status" value="1"/>
</dbReference>
<dbReference type="HAMAP" id="MF_00046">
    <property type="entry name" value="MurC"/>
    <property type="match status" value="1"/>
</dbReference>
<dbReference type="InterPro" id="IPR036565">
    <property type="entry name" value="Mur-like_cat_sf"/>
</dbReference>
<dbReference type="InterPro" id="IPR004101">
    <property type="entry name" value="Mur_ligase_C"/>
</dbReference>
<dbReference type="InterPro" id="IPR036615">
    <property type="entry name" value="Mur_ligase_C_dom_sf"/>
</dbReference>
<dbReference type="InterPro" id="IPR013221">
    <property type="entry name" value="Mur_ligase_cen"/>
</dbReference>
<dbReference type="InterPro" id="IPR000713">
    <property type="entry name" value="Mur_ligase_N"/>
</dbReference>
<dbReference type="InterPro" id="IPR050061">
    <property type="entry name" value="MurCDEF_pg_biosynth"/>
</dbReference>
<dbReference type="InterPro" id="IPR005758">
    <property type="entry name" value="UDP-N-AcMur_Ala_ligase_MurC"/>
</dbReference>
<dbReference type="NCBIfam" id="TIGR01082">
    <property type="entry name" value="murC"/>
    <property type="match status" value="1"/>
</dbReference>
<dbReference type="PANTHER" id="PTHR43445:SF3">
    <property type="entry name" value="UDP-N-ACETYLMURAMATE--L-ALANINE LIGASE"/>
    <property type="match status" value="1"/>
</dbReference>
<dbReference type="PANTHER" id="PTHR43445">
    <property type="entry name" value="UDP-N-ACETYLMURAMATE--L-ALANINE LIGASE-RELATED"/>
    <property type="match status" value="1"/>
</dbReference>
<dbReference type="Pfam" id="PF01225">
    <property type="entry name" value="Mur_ligase"/>
    <property type="match status" value="1"/>
</dbReference>
<dbReference type="Pfam" id="PF02875">
    <property type="entry name" value="Mur_ligase_C"/>
    <property type="match status" value="1"/>
</dbReference>
<dbReference type="Pfam" id="PF08245">
    <property type="entry name" value="Mur_ligase_M"/>
    <property type="match status" value="1"/>
</dbReference>
<dbReference type="SUPFAM" id="SSF51984">
    <property type="entry name" value="MurCD N-terminal domain"/>
    <property type="match status" value="1"/>
</dbReference>
<dbReference type="SUPFAM" id="SSF53623">
    <property type="entry name" value="MurD-like peptide ligases, catalytic domain"/>
    <property type="match status" value="1"/>
</dbReference>
<dbReference type="SUPFAM" id="SSF53244">
    <property type="entry name" value="MurD-like peptide ligases, peptide-binding domain"/>
    <property type="match status" value="1"/>
</dbReference>
<gene>
    <name evidence="1" type="primary">murC</name>
    <name type="ordered locus">BQ08850</name>
</gene>
<proteinExistence type="inferred from homology"/>
<feature type="chain" id="PRO_0000182057" description="UDP-N-acetylmuramate--L-alanine ligase">
    <location>
        <begin position="1"/>
        <end position="475"/>
    </location>
</feature>
<feature type="binding site" evidence="1">
    <location>
        <begin position="114"/>
        <end position="120"/>
    </location>
    <ligand>
        <name>ATP</name>
        <dbReference type="ChEBI" id="CHEBI:30616"/>
    </ligand>
</feature>
<accession>Q6G125</accession>
<reference key="1">
    <citation type="journal article" date="2004" name="Proc. Natl. Acad. Sci. U.S.A.">
        <title>The louse-borne human pathogen Bartonella quintana is a genomic derivative of the zoonotic agent Bartonella henselae.</title>
        <authorList>
            <person name="Alsmark U.C.M."/>
            <person name="Frank A.C."/>
            <person name="Karlberg E.O."/>
            <person name="Legault B.-A."/>
            <person name="Ardell D.H."/>
            <person name="Canbaeck B."/>
            <person name="Eriksson A.-S."/>
            <person name="Naeslund A.K."/>
            <person name="Handley S.A."/>
            <person name="Huvet M."/>
            <person name="La Scola B."/>
            <person name="Holmberg M."/>
            <person name="Andersson S.G.E."/>
        </authorList>
    </citation>
    <scope>NUCLEOTIDE SEQUENCE [LARGE SCALE GENOMIC DNA]</scope>
    <source>
        <strain>Toulouse</strain>
    </source>
</reference>
<evidence type="ECO:0000255" key="1">
    <source>
        <dbReference type="HAMAP-Rule" id="MF_00046"/>
    </source>
</evidence>
<keyword id="KW-0067">ATP-binding</keyword>
<keyword id="KW-0131">Cell cycle</keyword>
<keyword id="KW-0132">Cell division</keyword>
<keyword id="KW-0133">Cell shape</keyword>
<keyword id="KW-0961">Cell wall biogenesis/degradation</keyword>
<keyword id="KW-0963">Cytoplasm</keyword>
<keyword id="KW-0436">Ligase</keyword>
<keyword id="KW-0547">Nucleotide-binding</keyword>
<keyword id="KW-0573">Peptidoglycan synthesis</keyword>
<protein>
    <recommendedName>
        <fullName evidence="1">UDP-N-acetylmuramate--L-alanine ligase</fullName>
        <ecNumber evidence="1">6.3.2.8</ecNumber>
    </recommendedName>
    <alternativeName>
        <fullName evidence="1">UDP-N-acetylmuramoyl-L-alanine synthetase</fullName>
    </alternativeName>
</protein>
<name>MURC_BARQU</name>
<comment type="function">
    <text evidence="1">Cell wall formation.</text>
</comment>
<comment type="catalytic activity">
    <reaction evidence="1">
        <text>UDP-N-acetyl-alpha-D-muramate + L-alanine + ATP = UDP-N-acetyl-alpha-D-muramoyl-L-alanine + ADP + phosphate + H(+)</text>
        <dbReference type="Rhea" id="RHEA:23372"/>
        <dbReference type="ChEBI" id="CHEBI:15378"/>
        <dbReference type="ChEBI" id="CHEBI:30616"/>
        <dbReference type="ChEBI" id="CHEBI:43474"/>
        <dbReference type="ChEBI" id="CHEBI:57972"/>
        <dbReference type="ChEBI" id="CHEBI:70757"/>
        <dbReference type="ChEBI" id="CHEBI:83898"/>
        <dbReference type="ChEBI" id="CHEBI:456216"/>
        <dbReference type="EC" id="6.3.2.8"/>
    </reaction>
</comment>
<comment type="pathway">
    <text evidence="1">Cell wall biogenesis; peptidoglycan biosynthesis.</text>
</comment>
<comment type="subcellular location">
    <subcellularLocation>
        <location evidence="1">Cytoplasm</location>
    </subcellularLocation>
</comment>
<comment type="similarity">
    <text evidence="1">Belongs to the MurCDEF family.</text>
</comment>